<gene>
    <name type="ordered locus">P9215_08611</name>
</gene>
<feature type="chain" id="PRO_0000342715" description="D-fructose 1,6-bisphosphatase class 2/sedoheptulose 1,7-bisphosphatase">
    <location>
        <begin position="1"/>
        <end position="333"/>
    </location>
</feature>
<feature type="binding site" evidence="1">
    <location>
        <position position="33"/>
    </location>
    <ligand>
        <name>Mn(2+)</name>
        <dbReference type="ChEBI" id="CHEBI:29035"/>
        <label>1</label>
    </ligand>
</feature>
<feature type="binding site" evidence="1">
    <location>
        <position position="57"/>
    </location>
    <ligand>
        <name>Mn(2+)</name>
        <dbReference type="ChEBI" id="CHEBI:29035"/>
        <label>1</label>
    </ligand>
</feature>
<feature type="binding site" evidence="1">
    <location>
        <position position="85"/>
    </location>
    <ligand>
        <name>Mn(2+)</name>
        <dbReference type="ChEBI" id="CHEBI:29035"/>
        <label>2</label>
    </ligand>
</feature>
<feature type="binding site" evidence="1">
    <location>
        <begin position="88"/>
        <end position="90"/>
    </location>
    <ligand>
        <name>substrate</name>
    </ligand>
</feature>
<feature type="binding site" evidence="1">
    <location>
        <position position="88"/>
    </location>
    <ligand>
        <name>Mn(2+)</name>
        <dbReference type="ChEBI" id="CHEBI:29035"/>
        <label>2</label>
    </ligand>
</feature>
<feature type="binding site" evidence="1">
    <location>
        <position position="119"/>
    </location>
    <ligand>
        <name>substrate</name>
    </ligand>
</feature>
<feature type="binding site" evidence="1">
    <location>
        <begin position="164"/>
        <end position="166"/>
    </location>
    <ligand>
        <name>substrate</name>
    </ligand>
</feature>
<feature type="binding site" evidence="1">
    <location>
        <begin position="186"/>
        <end position="188"/>
    </location>
    <ligand>
        <name>substrate</name>
    </ligand>
</feature>
<feature type="binding site" evidence="1">
    <location>
        <position position="213"/>
    </location>
    <ligand>
        <name>Mn(2+)</name>
        <dbReference type="ChEBI" id="CHEBI:29035"/>
        <label>2</label>
    </ligand>
</feature>
<comment type="function">
    <text evidence="1">Catalyzes the hydrolysis of fructose 1,6-bisphosphate (Fru 1,6-P2) and sedoheptulose 1,7-bisphosphate (Sed 1,7-P2) to fructose 6-phosphate and sedoheptulose 7-phosphate, respectively.</text>
</comment>
<comment type="catalytic activity">
    <reaction>
        <text>beta-D-fructose 1,6-bisphosphate + H2O = beta-D-fructose 6-phosphate + phosphate</text>
        <dbReference type="Rhea" id="RHEA:11064"/>
        <dbReference type="ChEBI" id="CHEBI:15377"/>
        <dbReference type="ChEBI" id="CHEBI:32966"/>
        <dbReference type="ChEBI" id="CHEBI:43474"/>
        <dbReference type="ChEBI" id="CHEBI:57634"/>
        <dbReference type="EC" id="3.1.3.11"/>
    </reaction>
</comment>
<comment type="catalytic activity">
    <reaction>
        <text>D-sedoheptulose 1,7-bisphosphate + H2O = D-sedoheptulose 7-phosphate + phosphate</text>
        <dbReference type="Rhea" id="RHEA:17461"/>
        <dbReference type="ChEBI" id="CHEBI:15377"/>
        <dbReference type="ChEBI" id="CHEBI:43474"/>
        <dbReference type="ChEBI" id="CHEBI:57483"/>
        <dbReference type="ChEBI" id="CHEBI:58335"/>
        <dbReference type="EC" id="3.1.3.37"/>
    </reaction>
</comment>
<comment type="cofactor">
    <cofactor evidence="1">
        <name>Mn(2+)</name>
        <dbReference type="ChEBI" id="CHEBI:29035"/>
    </cofactor>
</comment>
<comment type="pathway">
    <text>Carbohydrate biosynthesis; Calvin cycle.</text>
</comment>
<comment type="subunit">
    <text evidence="1">Homotetramer.</text>
</comment>
<comment type="similarity">
    <text evidence="2">Belongs to the FBPase class 2 family.</text>
</comment>
<protein>
    <recommendedName>
        <fullName>D-fructose 1,6-bisphosphatase class 2/sedoheptulose 1,7-bisphosphatase</fullName>
        <shortName>FBPase class 2/SBPase</shortName>
        <ecNumber>3.1.3.11</ecNumber>
        <ecNumber>3.1.3.37</ecNumber>
    </recommendedName>
</protein>
<sequence>MNQTLIQEILEVVEQAAIASAKLTGLGQKDEADAAAVEAMRLRMGKIEMKGKIVIGEGERDEAPMLYIGEEVGSGNGPGVDFAVDPCEGTNLCANNQRGSMAVLAASDTGGLFNAPDFYMNKLAAPPAAKGKVDIRNSATENLKILSDCLGLSIDELTVVVMDRTRHKDLIKEIRGCGAKVQPISDGDVQAAIACGFAGTGTHCLMGIGAAPEGVISAAAMRALGGHFQGQLVYDPAIAQTSEWADYTKEGNIKRLNEMGITDIDKIYEANELASGENVVFAGSGITDGLLFDGVKFERDCVRTSSLVISTLDSTARFTNTVHIKDGAKSISL</sequence>
<proteinExistence type="inferred from homology"/>
<evidence type="ECO:0000250" key="1"/>
<evidence type="ECO:0000305" key="2"/>
<dbReference type="EC" id="3.1.3.11"/>
<dbReference type="EC" id="3.1.3.37"/>
<dbReference type="EMBL" id="CP000825">
    <property type="protein sequence ID" value="ABV50476.1"/>
    <property type="molecule type" value="Genomic_DNA"/>
</dbReference>
<dbReference type="SMR" id="A8G4E5"/>
<dbReference type="STRING" id="93060.P9215_08611"/>
<dbReference type="KEGG" id="pmh:P9215_08611"/>
<dbReference type="eggNOG" id="COG1494">
    <property type="taxonomic scope" value="Bacteria"/>
</dbReference>
<dbReference type="HOGENOM" id="CLU_054938_0_0_3"/>
<dbReference type="OrthoDB" id="9779353at2"/>
<dbReference type="UniPathway" id="UPA00116"/>
<dbReference type="Proteomes" id="UP000002014">
    <property type="component" value="Chromosome"/>
</dbReference>
<dbReference type="GO" id="GO:0005829">
    <property type="term" value="C:cytosol"/>
    <property type="evidence" value="ECO:0007669"/>
    <property type="project" value="TreeGrafter"/>
</dbReference>
<dbReference type="GO" id="GO:0042132">
    <property type="term" value="F:fructose 1,6-bisphosphate 1-phosphatase activity"/>
    <property type="evidence" value="ECO:0007669"/>
    <property type="project" value="UniProtKB-EC"/>
</dbReference>
<dbReference type="GO" id="GO:0046872">
    <property type="term" value="F:metal ion binding"/>
    <property type="evidence" value="ECO:0007669"/>
    <property type="project" value="UniProtKB-KW"/>
</dbReference>
<dbReference type="GO" id="GO:0050278">
    <property type="term" value="F:sedoheptulose-bisphosphatase activity"/>
    <property type="evidence" value="ECO:0007669"/>
    <property type="project" value="UniProtKB-EC"/>
</dbReference>
<dbReference type="GO" id="GO:0030388">
    <property type="term" value="P:fructose 1,6-bisphosphate metabolic process"/>
    <property type="evidence" value="ECO:0007669"/>
    <property type="project" value="TreeGrafter"/>
</dbReference>
<dbReference type="GO" id="GO:0006094">
    <property type="term" value="P:gluconeogenesis"/>
    <property type="evidence" value="ECO:0007669"/>
    <property type="project" value="InterPro"/>
</dbReference>
<dbReference type="GO" id="GO:0006071">
    <property type="term" value="P:glycerol metabolic process"/>
    <property type="evidence" value="ECO:0007669"/>
    <property type="project" value="InterPro"/>
</dbReference>
<dbReference type="GO" id="GO:0019253">
    <property type="term" value="P:reductive pentose-phosphate cycle"/>
    <property type="evidence" value="ECO:0007669"/>
    <property type="project" value="UniProtKB-UniPathway"/>
</dbReference>
<dbReference type="CDD" id="cd01516">
    <property type="entry name" value="FBPase_glpX"/>
    <property type="match status" value="1"/>
</dbReference>
<dbReference type="FunFam" id="3.40.190.90:FF:000001">
    <property type="entry name" value="Fructose-1,6-bisphosphatase"/>
    <property type="match status" value="1"/>
</dbReference>
<dbReference type="Gene3D" id="3.40.190.90">
    <property type="match status" value="1"/>
</dbReference>
<dbReference type="Gene3D" id="3.30.540.10">
    <property type="entry name" value="Fructose-1,6-Bisphosphatase, subunit A, domain 1"/>
    <property type="match status" value="1"/>
</dbReference>
<dbReference type="InterPro" id="IPR004464">
    <property type="entry name" value="FBPase_class-2/SBPase"/>
</dbReference>
<dbReference type="NCBIfam" id="TIGR00330">
    <property type="entry name" value="glpX"/>
    <property type="match status" value="1"/>
</dbReference>
<dbReference type="PANTHER" id="PTHR30447:SF0">
    <property type="entry name" value="FRUCTOSE-1,6-BISPHOSPHATASE 1 CLASS 2-RELATED"/>
    <property type="match status" value="1"/>
</dbReference>
<dbReference type="PANTHER" id="PTHR30447">
    <property type="entry name" value="FRUCTOSE-1,6-BISPHOSPHATASE CLASS 2"/>
    <property type="match status" value="1"/>
</dbReference>
<dbReference type="Pfam" id="PF03320">
    <property type="entry name" value="FBPase_glpX"/>
    <property type="match status" value="1"/>
</dbReference>
<dbReference type="PIRSF" id="PIRSF004532">
    <property type="entry name" value="GlpX"/>
    <property type="match status" value="1"/>
</dbReference>
<dbReference type="SUPFAM" id="SSF56655">
    <property type="entry name" value="Carbohydrate phosphatase"/>
    <property type="match status" value="1"/>
</dbReference>
<reference key="1">
    <citation type="journal article" date="2007" name="PLoS Genet.">
        <title>Patterns and implications of gene gain and loss in the evolution of Prochlorococcus.</title>
        <authorList>
            <person name="Kettler G.C."/>
            <person name="Martiny A.C."/>
            <person name="Huang K."/>
            <person name="Zucker J."/>
            <person name="Coleman M.L."/>
            <person name="Rodrigue S."/>
            <person name="Chen F."/>
            <person name="Lapidus A."/>
            <person name="Ferriera S."/>
            <person name="Johnson J."/>
            <person name="Steglich C."/>
            <person name="Church G.M."/>
            <person name="Richardson P."/>
            <person name="Chisholm S.W."/>
        </authorList>
    </citation>
    <scope>NUCLEOTIDE SEQUENCE [LARGE SCALE GENOMIC DNA]</scope>
    <source>
        <strain>MIT 9215</strain>
    </source>
</reference>
<accession>A8G4E5</accession>
<name>FBSB_PROM2</name>
<keyword id="KW-0113">Calvin cycle</keyword>
<keyword id="KW-0119">Carbohydrate metabolism</keyword>
<keyword id="KW-0378">Hydrolase</keyword>
<keyword id="KW-0464">Manganese</keyword>
<keyword id="KW-0479">Metal-binding</keyword>
<organism>
    <name type="scientific">Prochlorococcus marinus (strain MIT 9215)</name>
    <dbReference type="NCBI Taxonomy" id="93060"/>
    <lineage>
        <taxon>Bacteria</taxon>
        <taxon>Bacillati</taxon>
        <taxon>Cyanobacteriota</taxon>
        <taxon>Cyanophyceae</taxon>
        <taxon>Synechococcales</taxon>
        <taxon>Prochlorococcaceae</taxon>
        <taxon>Prochlorococcus</taxon>
    </lineage>
</organism>